<evidence type="ECO:0000255" key="1">
    <source>
        <dbReference type="HAMAP-Rule" id="MF_00376"/>
    </source>
</evidence>
<gene>
    <name evidence="1" type="primary">coaE</name>
    <name type="ordered locus">SAK_1518</name>
</gene>
<protein>
    <recommendedName>
        <fullName evidence="1">Dephospho-CoA kinase</fullName>
        <ecNumber evidence="1">2.7.1.24</ecNumber>
    </recommendedName>
    <alternativeName>
        <fullName evidence="1">Dephosphocoenzyme A kinase</fullName>
    </alternativeName>
</protein>
<organism>
    <name type="scientific">Streptococcus agalactiae serotype Ia (strain ATCC 27591 / A909 / CDC SS700)</name>
    <dbReference type="NCBI Taxonomy" id="205921"/>
    <lineage>
        <taxon>Bacteria</taxon>
        <taxon>Bacillati</taxon>
        <taxon>Bacillota</taxon>
        <taxon>Bacilli</taxon>
        <taxon>Lactobacillales</taxon>
        <taxon>Streptococcaceae</taxon>
        <taxon>Streptococcus</taxon>
    </lineage>
</organism>
<reference key="1">
    <citation type="journal article" date="2005" name="Proc. Natl. Acad. Sci. U.S.A.">
        <title>Genome analysis of multiple pathogenic isolates of Streptococcus agalactiae: implications for the microbial 'pan-genome'.</title>
        <authorList>
            <person name="Tettelin H."/>
            <person name="Masignani V."/>
            <person name="Cieslewicz M.J."/>
            <person name="Donati C."/>
            <person name="Medini D."/>
            <person name="Ward N.L."/>
            <person name="Angiuoli S.V."/>
            <person name="Crabtree J."/>
            <person name="Jones A.L."/>
            <person name="Durkin A.S."/>
            <person name="DeBoy R.T."/>
            <person name="Davidsen T.M."/>
            <person name="Mora M."/>
            <person name="Scarselli M."/>
            <person name="Margarit y Ros I."/>
            <person name="Peterson J.D."/>
            <person name="Hauser C.R."/>
            <person name="Sundaram J.P."/>
            <person name="Nelson W.C."/>
            <person name="Madupu R."/>
            <person name="Brinkac L.M."/>
            <person name="Dodson R.J."/>
            <person name="Rosovitz M.J."/>
            <person name="Sullivan S.A."/>
            <person name="Daugherty S.C."/>
            <person name="Haft D.H."/>
            <person name="Selengut J."/>
            <person name="Gwinn M.L."/>
            <person name="Zhou L."/>
            <person name="Zafar N."/>
            <person name="Khouri H."/>
            <person name="Radune D."/>
            <person name="Dimitrov G."/>
            <person name="Watkins K."/>
            <person name="O'Connor K.J."/>
            <person name="Smith S."/>
            <person name="Utterback T.R."/>
            <person name="White O."/>
            <person name="Rubens C.E."/>
            <person name="Grandi G."/>
            <person name="Madoff L.C."/>
            <person name="Kasper D.L."/>
            <person name="Telford J.L."/>
            <person name="Wessels M.R."/>
            <person name="Rappuoli R."/>
            <person name="Fraser C.M."/>
        </authorList>
    </citation>
    <scope>NUCLEOTIDE SEQUENCE [LARGE SCALE GENOMIC DNA]</scope>
    <source>
        <strain>ATCC 27591 / A909 / CDC SS700</strain>
    </source>
</reference>
<accession>Q3K029</accession>
<proteinExistence type="inferred from homology"/>
<sequence>MTKIIGLTGGIASGKSTVTKIIRESGFKVIDADQVVHKLQAKGGKLYQALLEWLGPEILDADGELDRPKLSQMIFANPDNMKTSARLQNSIIRQELACQRDQLKQTEEIFFMDIPLLIEEKYIKWFDEIWLVFVDKEKQLQRLMARNNYSREEAELRLSHQMPLTDKKSFASLIIDNNGDLITLKEQILDALQRL</sequence>
<keyword id="KW-0067">ATP-binding</keyword>
<keyword id="KW-0173">Coenzyme A biosynthesis</keyword>
<keyword id="KW-0963">Cytoplasm</keyword>
<keyword id="KW-0418">Kinase</keyword>
<keyword id="KW-0547">Nucleotide-binding</keyword>
<keyword id="KW-0808">Transferase</keyword>
<dbReference type="EC" id="2.7.1.24" evidence="1"/>
<dbReference type="EMBL" id="CP000114">
    <property type="protein sequence ID" value="ABA45428.1"/>
    <property type="molecule type" value="Genomic_DNA"/>
</dbReference>
<dbReference type="SMR" id="Q3K029"/>
<dbReference type="KEGG" id="sak:SAK_1518"/>
<dbReference type="HOGENOM" id="CLU_057180_0_0_9"/>
<dbReference type="UniPathway" id="UPA00241">
    <property type="reaction ID" value="UER00356"/>
</dbReference>
<dbReference type="GO" id="GO:0005737">
    <property type="term" value="C:cytoplasm"/>
    <property type="evidence" value="ECO:0007669"/>
    <property type="project" value="UniProtKB-SubCell"/>
</dbReference>
<dbReference type="GO" id="GO:0005524">
    <property type="term" value="F:ATP binding"/>
    <property type="evidence" value="ECO:0007669"/>
    <property type="project" value="UniProtKB-UniRule"/>
</dbReference>
<dbReference type="GO" id="GO:0004140">
    <property type="term" value="F:dephospho-CoA kinase activity"/>
    <property type="evidence" value="ECO:0007669"/>
    <property type="project" value="UniProtKB-UniRule"/>
</dbReference>
<dbReference type="GO" id="GO:0015937">
    <property type="term" value="P:coenzyme A biosynthetic process"/>
    <property type="evidence" value="ECO:0007669"/>
    <property type="project" value="UniProtKB-UniRule"/>
</dbReference>
<dbReference type="CDD" id="cd02022">
    <property type="entry name" value="DPCK"/>
    <property type="match status" value="1"/>
</dbReference>
<dbReference type="FunFam" id="3.40.50.300:FF:000991">
    <property type="entry name" value="Dephospho-CoA kinase"/>
    <property type="match status" value="1"/>
</dbReference>
<dbReference type="Gene3D" id="3.40.50.300">
    <property type="entry name" value="P-loop containing nucleotide triphosphate hydrolases"/>
    <property type="match status" value="1"/>
</dbReference>
<dbReference type="HAMAP" id="MF_00376">
    <property type="entry name" value="Dephospho_CoA_kinase"/>
    <property type="match status" value="1"/>
</dbReference>
<dbReference type="InterPro" id="IPR001977">
    <property type="entry name" value="Depp_CoAkinase"/>
</dbReference>
<dbReference type="InterPro" id="IPR027417">
    <property type="entry name" value="P-loop_NTPase"/>
</dbReference>
<dbReference type="NCBIfam" id="TIGR00152">
    <property type="entry name" value="dephospho-CoA kinase"/>
    <property type="match status" value="1"/>
</dbReference>
<dbReference type="PANTHER" id="PTHR10695:SF46">
    <property type="entry name" value="BIFUNCTIONAL COENZYME A SYNTHASE-RELATED"/>
    <property type="match status" value="1"/>
</dbReference>
<dbReference type="PANTHER" id="PTHR10695">
    <property type="entry name" value="DEPHOSPHO-COA KINASE-RELATED"/>
    <property type="match status" value="1"/>
</dbReference>
<dbReference type="Pfam" id="PF01121">
    <property type="entry name" value="CoaE"/>
    <property type="match status" value="1"/>
</dbReference>
<dbReference type="SUPFAM" id="SSF52540">
    <property type="entry name" value="P-loop containing nucleoside triphosphate hydrolases"/>
    <property type="match status" value="1"/>
</dbReference>
<dbReference type="PROSITE" id="PS51219">
    <property type="entry name" value="DPCK"/>
    <property type="match status" value="1"/>
</dbReference>
<comment type="function">
    <text evidence="1">Catalyzes the phosphorylation of the 3'-hydroxyl group of dephosphocoenzyme A to form coenzyme A.</text>
</comment>
<comment type="catalytic activity">
    <reaction evidence="1">
        <text>3'-dephospho-CoA + ATP = ADP + CoA + H(+)</text>
        <dbReference type="Rhea" id="RHEA:18245"/>
        <dbReference type="ChEBI" id="CHEBI:15378"/>
        <dbReference type="ChEBI" id="CHEBI:30616"/>
        <dbReference type="ChEBI" id="CHEBI:57287"/>
        <dbReference type="ChEBI" id="CHEBI:57328"/>
        <dbReference type="ChEBI" id="CHEBI:456216"/>
        <dbReference type="EC" id="2.7.1.24"/>
    </reaction>
</comment>
<comment type="pathway">
    <text evidence="1">Cofactor biosynthesis; coenzyme A biosynthesis; CoA from (R)-pantothenate: step 5/5.</text>
</comment>
<comment type="subcellular location">
    <subcellularLocation>
        <location evidence="1">Cytoplasm</location>
    </subcellularLocation>
</comment>
<comment type="similarity">
    <text evidence="1">Belongs to the CoaE family.</text>
</comment>
<name>COAE_STRA1</name>
<feature type="chain" id="PRO_0000243346" description="Dephospho-CoA kinase">
    <location>
        <begin position="1"/>
        <end position="195"/>
    </location>
</feature>
<feature type="domain" description="DPCK" evidence="1">
    <location>
        <begin position="4"/>
        <end position="195"/>
    </location>
</feature>
<feature type="binding site" evidence="1">
    <location>
        <begin position="12"/>
        <end position="17"/>
    </location>
    <ligand>
        <name>ATP</name>
        <dbReference type="ChEBI" id="CHEBI:30616"/>
    </ligand>
</feature>